<feature type="transit peptide" description="Mitochondrion" evidence="1">
    <location>
        <begin position="1"/>
        <end position="53"/>
    </location>
</feature>
<feature type="chain" id="PRO_0000020485" description="Pyruvate dehydrogenase protein X component, mitochondrial">
    <location>
        <begin position="54"/>
        <end position="501"/>
    </location>
</feature>
<feature type="domain" description="Lipoyl-binding" evidence="3">
    <location>
        <begin position="56"/>
        <end position="132"/>
    </location>
</feature>
<feature type="domain" description="Peripheral subunit-binding (PSBD)" evidence="4">
    <location>
        <begin position="183"/>
        <end position="220"/>
    </location>
</feature>
<feature type="region of interest" description="Disordered" evidence="5">
    <location>
        <begin position="145"/>
        <end position="176"/>
    </location>
</feature>
<feature type="region of interest" description="Disordered" evidence="5">
    <location>
        <begin position="228"/>
        <end position="256"/>
    </location>
</feature>
<feature type="compositionally biased region" description="Pro residues" evidence="5">
    <location>
        <begin position="149"/>
        <end position="169"/>
    </location>
</feature>
<feature type="modified residue" description="N6-lipoyllysine" evidence="1 3">
    <location>
        <position position="97"/>
    </location>
</feature>
<feature type="modified residue" description="N6-acetyllysine" evidence="2">
    <location>
        <position position="194"/>
    </location>
</feature>
<feature type="modified residue" description="Phosphoserine" evidence="2">
    <location>
        <position position="196"/>
    </location>
</feature>
<feature type="modified residue" description="N6-succinyllysine" evidence="7">
    <location>
        <position position="394"/>
    </location>
</feature>
<keyword id="KW-0007">Acetylation</keyword>
<keyword id="KW-0450">Lipoyl</keyword>
<keyword id="KW-0496">Mitochondrion</keyword>
<keyword id="KW-0597">Phosphoprotein</keyword>
<keyword id="KW-1185">Reference proteome</keyword>
<keyword id="KW-0809">Transit peptide</keyword>
<evidence type="ECO:0000250" key="1"/>
<evidence type="ECO:0000250" key="2">
    <source>
        <dbReference type="UniProtKB" id="O00330"/>
    </source>
</evidence>
<evidence type="ECO:0000255" key="3">
    <source>
        <dbReference type="PROSITE-ProRule" id="PRU01066"/>
    </source>
</evidence>
<evidence type="ECO:0000255" key="4">
    <source>
        <dbReference type="PROSITE-ProRule" id="PRU01170"/>
    </source>
</evidence>
<evidence type="ECO:0000256" key="5">
    <source>
        <dbReference type="SAM" id="MobiDB-lite"/>
    </source>
</evidence>
<evidence type="ECO:0000305" key="6"/>
<evidence type="ECO:0007744" key="7">
    <source>
    </source>
</evidence>
<reference key="1">
    <citation type="journal article" date="2005" name="Science">
        <title>The transcriptional landscape of the mammalian genome.</title>
        <authorList>
            <person name="Carninci P."/>
            <person name="Kasukawa T."/>
            <person name="Katayama S."/>
            <person name="Gough J."/>
            <person name="Frith M.C."/>
            <person name="Maeda N."/>
            <person name="Oyama R."/>
            <person name="Ravasi T."/>
            <person name="Lenhard B."/>
            <person name="Wells C."/>
            <person name="Kodzius R."/>
            <person name="Shimokawa K."/>
            <person name="Bajic V.B."/>
            <person name="Brenner S.E."/>
            <person name="Batalov S."/>
            <person name="Forrest A.R."/>
            <person name="Zavolan M."/>
            <person name="Davis M.J."/>
            <person name="Wilming L.G."/>
            <person name="Aidinis V."/>
            <person name="Allen J.E."/>
            <person name="Ambesi-Impiombato A."/>
            <person name="Apweiler R."/>
            <person name="Aturaliya R.N."/>
            <person name="Bailey T.L."/>
            <person name="Bansal M."/>
            <person name="Baxter L."/>
            <person name="Beisel K.W."/>
            <person name="Bersano T."/>
            <person name="Bono H."/>
            <person name="Chalk A.M."/>
            <person name="Chiu K.P."/>
            <person name="Choudhary V."/>
            <person name="Christoffels A."/>
            <person name="Clutterbuck D.R."/>
            <person name="Crowe M.L."/>
            <person name="Dalla E."/>
            <person name="Dalrymple B.P."/>
            <person name="de Bono B."/>
            <person name="Della Gatta G."/>
            <person name="di Bernardo D."/>
            <person name="Down T."/>
            <person name="Engstrom P."/>
            <person name="Fagiolini M."/>
            <person name="Faulkner G."/>
            <person name="Fletcher C.F."/>
            <person name="Fukushima T."/>
            <person name="Furuno M."/>
            <person name="Futaki S."/>
            <person name="Gariboldi M."/>
            <person name="Georgii-Hemming P."/>
            <person name="Gingeras T.R."/>
            <person name="Gojobori T."/>
            <person name="Green R.E."/>
            <person name="Gustincich S."/>
            <person name="Harbers M."/>
            <person name="Hayashi Y."/>
            <person name="Hensch T.K."/>
            <person name="Hirokawa N."/>
            <person name="Hill D."/>
            <person name="Huminiecki L."/>
            <person name="Iacono M."/>
            <person name="Ikeo K."/>
            <person name="Iwama A."/>
            <person name="Ishikawa T."/>
            <person name="Jakt M."/>
            <person name="Kanapin A."/>
            <person name="Katoh M."/>
            <person name="Kawasawa Y."/>
            <person name="Kelso J."/>
            <person name="Kitamura H."/>
            <person name="Kitano H."/>
            <person name="Kollias G."/>
            <person name="Krishnan S.P."/>
            <person name="Kruger A."/>
            <person name="Kummerfeld S.K."/>
            <person name="Kurochkin I.V."/>
            <person name="Lareau L.F."/>
            <person name="Lazarevic D."/>
            <person name="Lipovich L."/>
            <person name="Liu J."/>
            <person name="Liuni S."/>
            <person name="McWilliam S."/>
            <person name="Madan Babu M."/>
            <person name="Madera M."/>
            <person name="Marchionni L."/>
            <person name="Matsuda H."/>
            <person name="Matsuzawa S."/>
            <person name="Miki H."/>
            <person name="Mignone F."/>
            <person name="Miyake S."/>
            <person name="Morris K."/>
            <person name="Mottagui-Tabar S."/>
            <person name="Mulder N."/>
            <person name="Nakano N."/>
            <person name="Nakauchi H."/>
            <person name="Ng P."/>
            <person name="Nilsson R."/>
            <person name="Nishiguchi S."/>
            <person name="Nishikawa S."/>
            <person name="Nori F."/>
            <person name="Ohara O."/>
            <person name="Okazaki Y."/>
            <person name="Orlando V."/>
            <person name="Pang K.C."/>
            <person name="Pavan W.J."/>
            <person name="Pavesi G."/>
            <person name="Pesole G."/>
            <person name="Petrovsky N."/>
            <person name="Piazza S."/>
            <person name="Reed J."/>
            <person name="Reid J.F."/>
            <person name="Ring B.Z."/>
            <person name="Ringwald M."/>
            <person name="Rost B."/>
            <person name="Ruan Y."/>
            <person name="Salzberg S.L."/>
            <person name="Sandelin A."/>
            <person name="Schneider C."/>
            <person name="Schoenbach C."/>
            <person name="Sekiguchi K."/>
            <person name="Semple C.A."/>
            <person name="Seno S."/>
            <person name="Sessa L."/>
            <person name="Sheng Y."/>
            <person name="Shibata Y."/>
            <person name="Shimada H."/>
            <person name="Shimada K."/>
            <person name="Silva D."/>
            <person name="Sinclair B."/>
            <person name="Sperling S."/>
            <person name="Stupka E."/>
            <person name="Sugiura K."/>
            <person name="Sultana R."/>
            <person name="Takenaka Y."/>
            <person name="Taki K."/>
            <person name="Tammoja K."/>
            <person name="Tan S.L."/>
            <person name="Tang S."/>
            <person name="Taylor M.S."/>
            <person name="Tegner J."/>
            <person name="Teichmann S.A."/>
            <person name="Ueda H.R."/>
            <person name="van Nimwegen E."/>
            <person name="Verardo R."/>
            <person name="Wei C.L."/>
            <person name="Yagi K."/>
            <person name="Yamanishi H."/>
            <person name="Zabarovsky E."/>
            <person name="Zhu S."/>
            <person name="Zimmer A."/>
            <person name="Hide W."/>
            <person name="Bult C."/>
            <person name="Grimmond S.M."/>
            <person name="Teasdale R.D."/>
            <person name="Liu E.T."/>
            <person name="Brusic V."/>
            <person name="Quackenbush J."/>
            <person name="Wahlestedt C."/>
            <person name="Mattick J.S."/>
            <person name="Hume D.A."/>
            <person name="Kai C."/>
            <person name="Sasaki D."/>
            <person name="Tomaru Y."/>
            <person name="Fukuda S."/>
            <person name="Kanamori-Katayama M."/>
            <person name="Suzuki M."/>
            <person name="Aoki J."/>
            <person name="Arakawa T."/>
            <person name="Iida J."/>
            <person name="Imamura K."/>
            <person name="Itoh M."/>
            <person name="Kato T."/>
            <person name="Kawaji H."/>
            <person name="Kawagashira N."/>
            <person name="Kawashima T."/>
            <person name="Kojima M."/>
            <person name="Kondo S."/>
            <person name="Konno H."/>
            <person name="Nakano K."/>
            <person name="Ninomiya N."/>
            <person name="Nishio T."/>
            <person name="Okada M."/>
            <person name="Plessy C."/>
            <person name="Shibata K."/>
            <person name="Shiraki T."/>
            <person name="Suzuki S."/>
            <person name="Tagami M."/>
            <person name="Waki K."/>
            <person name="Watahiki A."/>
            <person name="Okamura-Oho Y."/>
            <person name="Suzuki H."/>
            <person name="Kawai J."/>
            <person name="Hayashizaki Y."/>
        </authorList>
    </citation>
    <scope>NUCLEOTIDE SEQUENCE [LARGE SCALE MRNA]</scope>
    <source>
        <strain>C57BL/6J</strain>
        <tissue>Corpus striatum</tissue>
    </source>
</reference>
<reference key="2">
    <citation type="journal article" date="2004" name="Genome Res.">
        <title>The status, quality, and expansion of the NIH full-length cDNA project: the Mammalian Gene Collection (MGC).</title>
        <authorList>
            <consortium name="The MGC Project Team"/>
        </authorList>
    </citation>
    <scope>NUCLEOTIDE SEQUENCE [LARGE SCALE MRNA]</scope>
    <source>
        <tissue>Brain</tissue>
    </source>
</reference>
<reference key="3">
    <citation type="journal article" date="2010" name="Cell">
        <title>A tissue-specific atlas of mouse protein phosphorylation and expression.</title>
        <authorList>
            <person name="Huttlin E.L."/>
            <person name="Jedrychowski M.P."/>
            <person name="Elias J.E."/>
            <person name="Goswami T."/>
            <person name="Rad R."/>
            <person name="Beausoleil S.A."/>
            <person name="Villen J."/>
            <person name="Haas W."/>
            <person name="Sowa M.E."/>
            <person name="Gygi S.P."/>
        </authorList>
    </citation>
    <scope>IDENTIFICATION BY MASS SPECTROMETRY [LARGE SCALE ANALYSIS]</scope>
    <source>
        <tissue>Brain</tissue>
        <tissue>Brown adipose tissue</tissue>
        <tissue>Heart</tissue>
        <tissue>Kidney</tissue>
        <tissue>Liver</tissue>
        <tissue>Lung</tissue>
        <tissue>Pancreas</tissue>
        <tissue>Spleen</tissue>
        <tissue>Testis</tissue>
    </source>
</reference>
<reference key="4">
    <citation type="journal article" date="2013" name="Mol. Cell">
        <title>SIRT5-mediated lysine desuccinylation impacts diverse metabolic pathways.</title>
        <authorList>
            <person name="Park J."/>
            <person name="Chen Y."/>
            <person name="Tishkoff D.X."/>
            <person name="Peng C."/>
            <person name="Tan M."/>
            <person name="Dai L."/>
            <person name="Xie Z."/>
            <person name="Zhang Y."/>
            <person name="Zwaans B.M."/>
            <person name="Skinner M.E."/>
            <person name="Lombard D.B."/>
            <person name="Zhao Y."/>
        </authorList>
    </citation>
    <scope>SUCCINYLATION [LARGE SCALE ANALYSIS] AT LYS-394</scope>
    <scope>IDENTIFICATION BY MASS SPECTROMETRY [LARGE SCALE ANALYSIS]</scope>
    <source>
        <tissue>Embryonic fibroblast</tissue>
    </source>
</reference>
<name>ODPX_MOUSE</name>
<comment type="function">
    <text evidence="1">Required for anchoring dihydrolipoamide dehydrogenase (E3) to the dihydrolipoamide transacetylase (E2) core of the pyruvate dehydrogenase complexes of eukaryotes. This specific binding is essential for a functional PDH complex (By similarity).</text>
</comment>
<comment type="subunit">
    <text evidence="2">Part of the inner core of the multimeric pyruvate dehydrogenase complex that is composed of about 48 DLAT and 12 PDHX molecules. This core binds multiple copies of pyruvate dehydrogenase (subunits PDH1A and PDHB, E1), dihydrolipoamide acetyltransferase (DLAT, E2) and lipoamide dehydrogenase (DLD, E3). Interacts with SIRT4. Interacts with DLD.</text>
</comment>
<comment type="subcellular location">
    <subcellularLocation>
        <location evidence="1">Mitochondrion matrix</location>
    </subcellularLocation>
</comment>
<comment type="PTM">
    <text evidence="2">Delipoylated at Lys-97 by SIRT4, delipoylation decreases the PHD complex activity.</text>
</comment>
<comment type="similarity">
    <text evidence="6">Belongs to the 2-oxoacid dehydrogenase family.</text>
</comment>
<organism>
    <name type="scientific">Mus musculus</name>
    <name type="common">Mouse</name>
    <dbReference type="NCBI Taxonomy" id="10090"/>
    <lineage>
        <taxon>Eukaryota</taxon>
        <taxon>Metazoa</taxon>
        <taxon>Chordata</taxon>
        <taxon>Craniata</taxon>
        <taxon>Vertebrata</taxon>
        <taxon>Euteleostomi</taxon>
        <taxon>Mammalia</taxon>
        <taxon>Eutheria</taxon>
        <taxon>Euarchontoglires</taxon>
        <taxon>Glires</taxon>
        <taxon>Rodentia</taxon>
        <taxon>Myomorpha</taxon>
        <taxon>Muroidea</taxon>
        <taxon>Muridae</taxon>
        <taxon>Murinae</taxon>
        <taxon>Mus</taxon>
        <taxon>Mus</taxon>
    </lineage>
</organism>
<gene>
    <name type="primary">Pdhx</name>
</gene>
<proteinExistence type="evidence at protein level"/>
<dbReference type="EMBL" id="AK047670">
    <property type="protein sequence ID" value="BAC33120.1"/>
    <property type="molecule type" value="mRNA"/>
</dbReference>
<dbReference type="EMBL" id="BC061231">
    <property type="protein sequence ID" value="AAH61231.1"/>
    <property type="molecule type" value="mRNA"/>
</dbReference>
<dbReference type="CCDS" id="CCDS16473.1"/>
<dbReference type="RefSeq" id="NP_780303.1">
    <property type="nucleotide sequence ID" value="NM_175094.5"/>
</dbReference>
<dbReference type="SMR" id="Q8BKZ9"/>
<dbReference type="BioGRID" id="205209">
    <property type="interactions" value="17"/>
</dbReference>
<dbReference type="FunCoup" id="Q8BKZ9">
    <property type="interactions" value="1193"/>
</dbReference>
<dbReference type="IntAct" id="Q8BKZ9">
    <property type="interactions" value="9"/>
</dbReference>
<dbReference type="MINT" id="Q8BKZ9"/>
<dbReference type="STRING" id="10090.ENSMUSP00000011058"/>
<dbReference type="GlyGen" id="Q8BKZ9">
    <property type="glycosylation" value="3 sites, 1 O-linked glycan (1 site)"/>
</dbReference>
<dbReference type="iPTMnet" id="Q8BKZ9"/>
<dbReference type="PhosphoSitePlus" id="Q8BKZ9"/>
<dbReference type="SwissPalm" id="Q8BKZ9"/>
<dbReference type="REPRODUCTION-2DPAGE" id="IPI00222767"/>
<dbReference type="jPOST" id="Q8BKZ9"/>
<dbReference type="PaxDb" id="10090-ENSMUSP00000011058"/>
<dbReference type="PeptideAtlas" id="Q8BKZ9"/>
<dbReference type="ProteomicsDB" id="289964"/>
<dbReference type="Pumba" id="Q8BKZ9"/>
<dbReference type="Antibodypedia" id="25893">
    <property type="antibodies" value="302 antibodies from 34 providers"/>
</dbReference>
<dbReference type="DNASU" id="27402"/>
<dbReference type="Ensembl" id="ENSMUST00000011058.9">
    <property type="protein sequence ID" value="ENSMUSP00000011058.3"/>
    <property type="gene ID" value="ENSMUSG00000010914.11"/>
</dbReference>
<dbReference type="GeneID" id="27402"/>
<dbReference type="KEGG" id="mmu:27402"/>
<dbReference type="UCSC" id="uc008lil.3">
    <property type="organism name" value="mouse"/>
</dbReference>
<dbReference type="AGR" id="MGI:1351627"/>
<dbReference type="CTD" id="8050"/>
<dbReference type="MGI" id="MGI:1351627">
    <property type="gene designation" value="Pdhx"/>
</dbReference>
<dbReference type="VEuPathDB" id="HostDB:ENSMUSG00000010914"/>
<dbReference type="eggNOG" id="KOG0557">
    <property type="taxonomic scope" value="Eukaryota"/>
</dbReference>
<dbReference type="GeneTree" id="ENSGT00940000156046"/>
<dbReference type="HOGENOM" id="CLU_016733_10_2_1"/>
<dbReference type="InParanoid" id="Q8BKZ9"/>
<dbReference type="OMA" id="TIKQKPW"/>
<dbReference type="OrthoDB" id="537444at2759"/>
<dbReference type="PhylomeDB" id="Q8BKZ9"/>
<dbReference type="TreeFam" id="TF332256"/>
<dbReference type="Reactome" id="R-MMU-204174">
    <property type="pathway name" value="Regulation of pyruvate dehydrogenase (PDH) complex"/>
</dbReference>
<dbReference type="Reactome" id="R-MMU-5362517">
    <property type="pathway name" value="Signaling by Retinoic Acid"/>
</dbReference>
<dbReference type="Reactome" id="R-MMU-9861559">
    <property type="pathway name" value="PDH complex synthesizes acetyl-CoA from PYR"/>
</dbReference>
<dbReference type="BioGRID-ORCS" id="27402">
    <property type="hits" value="6 hits in 79 CRISPR screens"/>
</dbReference>
<dbReference type="CD-CODE" id="CE726F99">
    <property type="entry name" value="Postsynaptic density"/>
</dbReference>
<dbReference type="ChiTaRS" id="Pdhx">
    <property type="organism name" value="mouse"/>
</dbReference>
<dbReference type="PRO" id="PR:Q8BKZ9"/>
<dbReference type="Proteomes" id="UP000000589">
    <property type="component" value="Chromosome 2"/>
</dbReference>
<dbReference type="RNAct" id="Q8BKZ9">
    <property type="molecule type" value="protein"/>
</dbReference>
<dbReference type="Bgee" id="ENSMUSG00000010914">
    <property type="expression patterns" value="Expressed in interventricular septum and 225 other cell types or tissues"/>
</dbReference>
<dbReference type="ExpressionAtlas" id="Q8BKZ9">
    <property type="expression patterns" value="baseline and differential"/>
</dbReference>
<dbReference type="GO" id="GO:1902493">
    <property type="term" value="C:acetyltransferase complex"/>
    <property type="evidence" value="ECO:0000266"/>
    <property type="project" value="MGI"/>
</dbReference>
<dbReference type="GO" id="GO:0005759">
    <property type="term" value="C:mitochondrial matrix"/>
    <property type="evidence" value="ECO:0000314"/>
    <property type="project" value="MGI"/>
</dbReference>
<dbReference type="GO" id="GO:0005739">
    <property type="term" value="C:mitochondrion"/>
    <property type="evidence" value="ECO:0007005"/>
    <property type="project" value="MGI"/>
</dbReference>
<dbReference type="GO" id="GO:0005654">
    <property type="term" value="C:nucleoplasm"/>
    <property type="evidence" value="ECO:0007669"/>
    <property type="project" value="Ensembl"/>
</dbReference>
<dbReference type="GO" id="GO:0005886">
    <property type="term" value="C:plasma membrane"/>
    <property type="evidence" value="ECO:0007669"/>
    <property type="project" value="Ensembl"/>
</dbReference>
<dbReference type="GO" id="GO:0045254">
    <property type="term" value="C:pyruvate dehydrogenase complex"/>
    <property type="evidence" value="ECO:0000266"/>
    <property type="project" value="MGI"/>
</dbReference>
<dbReference type="GO" id="GO:0016746">
    <property type="term" value="F:acyltransferase activity"/>
    <property type="evidence" value="ECO:0007669"/>
    <property type="project" value="InterPro"/>
</dbReference>
<dbReference type="GO" id="GO:0060090">
    <property type="term" value="F:molecular adaptor activity"/>
    <property type="evidence" value="ECO:0000266"/>
    <property type="project" value="MGI"/>
</dbReference>
<dbReference type="GO" id="GO:0034604">
    <property type="term" value="F:pyruvate dehydrogenase (NAD+) activity"/>
    <property type="evidence" value="ECO:0007669"/>
    <property type="project" value="Ensembl"/>
</dbReference>
<dbReference type="GO" id="GO:0006086">
    <property type="term" value="P:pyruvate decarboxylation to acetyl-CoA"/>
    <property type="evidence" value="ECO:0000315"/>
    <property type="project" value="MGI"/>
</dbReference>
<dbReference type="CDD" id="cd06849">
    <property type="entry name" value="lipoyl_domain"/>
    <property type="match status" value="1"/>
</dbReference>
<dbReference type="FunFam" id="2.40.50.100:FF:000010">
    <property type="entry name" value="Acetyltransferase component of pyruvate dehydrogenase complex"/>
    <property type="match status" value="1"/>
</dbReference>
<dbReference type="FunFam" id="3.30.559.10:FF:000003">
    <property type="entry name" value="Acetyltransferase component of pyruvate dehydrogenase complex"/>
    <property type="match status" value="1"/>
</dbReference>
<dbReference type="Gene3D" id="2.40.50.100">
    <property type="match status" value="1"/>
</dbReference>
<dbReference type="Gene3D" id="3.30.559.10">
    <property type="entry name" value="Chloramphenicol acetyltransferase-like domain"/>
    <property type="match status" value="1"/>
</dbReference>
<dbReference type="Gene3D" id="4.10.320.10">
    <property type="entry name" value="E3-binding domain"/>
    <property type="match status" value="1"/>
</dbReference>
<dbReference type="InterPro" id="IPR003016">
    <property type="entry name" value="2-oxoA_DH_lipoyl-BS"/>
</dbReference>
<dbReference type="InterPro" id="IPR001078">
    <property type="entry name" value="2-oxoacid_DH_actylTfrase"/>
</dbReference>
<dbReference type="InterPro" id="IPR000089">
    <property type="entry name" value="Biotin_lipoyl"/>
</dbReference>
<dbReference type="InterPro" id="IPR023213">
    <property type="entry name" value="CAT-like_dom_sf"/>
</dbReference>
<dbReference type="InterPro" id="IPR045257">
    <property type="entry name" value="E2/Pdx1"/>
</dbReference>
<dbReference type="InterPro" id="IPR036625">
    <property type="entry name" value="E3-bd_dom_sf"/>
</dbReference>
<dbReference type="InterPro" id="IPR004167">
    <property type="entry name" value="PSBD"/>
</dbReference>
<dbReference type="InterPro" id="IPR011053">
    <property type="entry name" value="Single_hybrid_motif"/>
</dbReference>
<dbReference type="PANTHER" id="PTHR23151">
    <property type="entry name" value="DIHYDROLIPOAMIDE ACETYL/SUCCINYL-TRANSFERASE-RELATED"/>
    <property type="match status" value="1"/>
</dbReference>
<dbReference type="PANTHER" id="PTHR23151:SF90">
    <property type="entry name" value="DIHYDROLIPOYLLYSINE-RESIDUE ACETYLTRANSFERASE COMPONENT OF PYRUVATE DEHYDROGENASE COMPLEX, MITOCHONDRIAL-RELATED"/>
    <property type="match status" value="1"/>
</dbReference>
<dbReference type="Pfam" id="PF00198">
    <property type="entry name" value="2-oxoacid_dh"/>
    <property type="match status" value="1"/>
</dbReference>
<dbReference type="Pfam" id="PF00364">
    <property type="entry name" value="Biotin_lipoyl"/>
    <property type="match status" value="1"/>
</dbReference>
<dbReference type="Pfam" id="PF02817">
    <property type="entry name" value="E3_binding"/>
    <property type="match status" value="1"/>
</dbReference>
<dbReference type="SUPFAM" id="SSF52777">
    <property type="entry name" value="CoA-dependent acyltransferases"/>
    <property type="match status" value="1"/>
</dbReference>
<dbReference type="SUPFAM" id="SSF47005">
    <property type="entry name" value="Peripheral subunit-binding domain of 2-oxo acid dehydrogenase complex"/>
    <property type="match status" value="1"/>
</dbReference>
<dbReference type="SUPFAM" id="SSF51230">
    <property type="entry name" value="Single hybrid motif"/>
    <property type="match status" value="1"/>
</dbReference>
<dbReference type="PROSITE" id="PS50968">
    <property type="entry name" value="BIOTINYL_LIPOYL"/>
    <property type="match status" value="1"/>
</dbReference>
<dbReference type="PROSITE" id="PS00189">
    <property type="entry name" value="LIPOYL"/>
    <property type="match status" value="1"/>
</dbReference>
<dbReference type="PROSITE" id="PS51826">
    <property type="entry name" value="PSBD"/>
    <property type="match status" value="1"/>
</dbReference>
<sequence length="501" mass="53999">MAASWRLHCNQPLLRYLLGFSSRRSLGLAQGAAAWPVDRGASWRWFHSTQLLQADPIKVLMPSLSPTMEQGNIVKWLRKEGEAVSAGDSLCEIETDKAVVTLDANDDGILAKIVVEEGAKNIQLGSLIALMVEEGEDWKQVEIPKDVSAPPPVSKPPAPTQPSPQPQIPCPARKEHKGTARFRLSPAARNILEKHSLDASQGTATGPRGIFTKEDALKLVELKQMGKITESRPASAPPPSLSASVPPQATAGPSYPRPMTPPVSIPGQPNAAGTFTEIPASNIRRVIAKRLTESKSTVPHAYATADCDLGAVLKVRRDLVKDDIKVSVNDFIIRAAAVTLKQMPGVNVTWDGEGPKQLPSVDISVAVATDKGLITPIIKDAAAKGIQEIADSVKVLSKKARDGKLMPEEYQGGSFSISNLGMFGIDEFAAVINPPQACILAVGRFRPVLKLTEDEEGNPQLQQHQLITVTMSSDSRVVDDELATRFLETFKANLENPMRLG</sequence>
<accession>Q8BKZ9</accession>
<protein>
    <recommendedName>
        <fullName>Pyruvate dehydrogenase protein X component, mitochondrial</fullName>
    </recommendedName>
    <alternativeName>
        <fullName>Dihydrolipoamide dehydrogenase-binding protein of pyruvate dehydrogenase complex</fullName>
    </alternativeName>
    <alternativeName>
        <fullName>Lipoyl-containing pyruvate dehydrogenase complex component X</fullName>
    </alternativeName>
</protein>